<keyword id="KW-0963">Cytoplasm</keyword>
<keyword id="KW-1185">Reference proteome</keyword>
<keyword id="KW-0819">tRNA processing</keyword>
<protein>
    <recommendedName>
        <fullName evidence="1">Protein TusB</fullName>
    </recommendedName>
    <alternativeName>
        <fullName evidence="1">tRNA 2-thiouridine synthesizing protein B</fullName>
    </alternativeName>
</protein>
<accession>Q8ZJB6</accession>
<accession>Q0WKA7</accession>
<accession>Q74XZ5</accession>
<accession>Q7CFU2</accession>
<reference key="1">
    <citation type="journal article" date="2001" name="Nature">
        <title>Genome sequence of Yersinia pestis, the causative agent of plague.</title>
        <authorList>
            <person name="Parkhill J."/>
            <person name="Wren B.W."/>
            <person name="Thomson N.R."/>
            <person name="Titball R.W."/>
            <person name="Holden M.T.G."/>
            <person name="Prentice M.B."/>
            <person name="Sebaihia M."/>
            <person name="James K.D."/>
            <person name="Churcher C.M."/>
            <person name="Mungall K.L."/>
            <person name="Baker S."/>
            <person name="Basham D."/>
            <person name="Bentley S.D."/>
            <person name="Brooks K."/>
            <person name="Cerdeno-Tarraga A.-M."/>
            <person name="Chillingworth T."/>
            <person name="Cronin A."/>
            <person name="Davies R.M."/>
            <person name="Davis P."/>
            <person name="Dougan G."/>
            <person name="Feltwell T."/>
            <person name="Hamlin N."/>
            <person name="Holroyd S."/>
            <person name="Jagels K."/>
            <person name="Karlyshev A.V."/>
            <person name="Leather S."/>
            <person name="Moule S."/>
            <person name="Oyston P.C.F."/>
            <person name="Quail M.A."/>
            <person name="Rutherford K.M."/>
            <person name="Simmonds M."/>
            <person name="Skelton J."/>
            <person name="Stevens K."/>
            <person name="Whitehead S."/>
            <person name="Barrell B.G."/>
        </authorList>
    </citation>
    <scope>NUCLEOTIDE SEQUENCE [LARGE SCALE GENOMIC DNA]</scope>
    <source>
        <strain>CO-92 / Biovar Orientalis</strain>
    </source>
</reference>
<reference key="2">
    <citation type="journal article" date="2002" name="J. Bacteriol.">
        <title>Genome sequence of Yersinia pestis KIM.</title>
        <authorList>
            <person name="Deng W."/>
            <person name="Burland V."/>
            <person name="Plunkett G. III"/>
            <person name="Boutin A."/>
            <person name="Mayhew G.F."/>
            <person name="Liss P."/>
            <person name="Perna N.T."/>
            <person name="Rose D.J."/>
            <person name="Mau B."/>
            <person name="Zhou S."/>
            <person name="Schwartz D.C."/>
            <person name="Fetherston J.D."/>
            <person name="Lindler L.E."/>
            <person name="Brubaker R.R."/>
            <person name="Plano G.V."/>
            <person name="Straley S.C."/>
            <person name="McDonough K.A."/>
            <person name="Nilles M.L."/>
            <person name="Matson J.S."/>
            <person name="Blattner F.R."/>
            <person name="Perry R.D."/>
        </authorList>
    </citation>
    <scope>NUCLEOTIDE SEQUENCE [LARGE SCALE GENOMIC DNA]</scope>
    <source>
        <strain>KIM10+ / Biovar Mediaevalis</strain>
    </source>
</reference>
<reference key="3">
    <citation type="journal article" date="2004" name="DNA Res.">
        <title>Complete genome sequence of Yersinia pestis strain 91001, an isolate avirulent to humans.</title>
        <authorList>
            <person name="Song Y."/>
            <person name="Tong Z."/>
            <person name="Wang J."/>
            <person name="Wang L."/>
            <person name="Guo Z."/>
            <person name="Han Y."/>
            <person name="Zhang J."/>
            <person name="Pei D."/>
            <person name="Zhou D."/>
            <person name="Qin H."/>
            <person name="Pang X."/>
            <person name="Han Y."/>
            <person name="Zhai J."/>
            <person name="Li M."/>
            <person name="Cui B."/>
            <person name="Qi Z."/>
            <person name="Jin L."/>
            <person name="Dai R."/>
            <person name="Chen F."/>
            <person name="Li S."/>
            <person name="Ye C."/>
            <person name="Du Z."/>
            <person name="Lin W."/>
            <person name="Wang J."/>
            <person name="Yu J."/>
            <person name="Yang H."/>
            <person name="Wang J."/>
            <person name="Huang P."/>
            <person name="Yang R."/>
        </authorList>
    </citation>
    <scope>NUCLEOTIDE SEQUENCE [LARGE SCALE GENOMIC DNA]</scope>
    <source>
        <strain>91001 / Biovar Mediaevalis</strain>
    </source>
</reference>
<comment type="function">
    <text evidence="1">Part of a sulfur-relay system required for 2-thiolation of 5-methylaminomethyl-2-thiouridine (mnm(5)s(2)U) at tRNA wobble positions.</text>
</comment>
<comment type="subunit">
    <text evidence="1">Heterohexamer, formed by a dimer of trimers. The hexameric TusBCD complex contains 2 copies each of TusB, TusC and TusD. The TusBCD complex interacts with TusE.</text>
</comment>
<comment type="subcellular location">
    <subcellularLocation>
        <location evidence="1">Cytoplasm</location>
    </subcellularLocation>
</comment>
<comment type="similarity">
    <text evidence="1">Belongs to the DsrH/TusB family.</text>
</comment>
<name>TUSB_YERPE</name>
<feature type="chain" id="PRO_0000234525" description="Protein TusB">
    <location>
        <begin position="1"/>
        <end position="95"/>
    </location>
</feature>
<gene>
    <name evidence="1" type="primary">tusB</name>
    <name type="ordered locus">YPO0199</name>
    <name type="ordered locus">y3981</name>
    <name type="ordered locus">YP_0198</name>
</gene>
<dbReference type="EMBL" id="AL590842">
    <property type="protein sequence ID" value="CAL18883.1"/>
    <property type="molecule type" value="Genomic_DNA"/>
</dbReference>
<dbReference type="EMBL" id="AE009952">
    <property type="protein sequence ID" value="AAM87525.1"/>
    <property type="molecule type" value="Genomic_DNA"/>
</dbReference>
<dbReference type="EMBL" id="AE017042">
    <property type="protein sequence ID" value="AAS60474.1"/>
    <property type="molecule type" value="Genomic_DNA"/>
</dbReference>
<dbReference type="PIR" id="AB0025">
    <property type="entry name" value="AB0025"/>
</dbReference>
<dbReference type="RefSeq" id="WP_002212322.1">
    <property type="nucleotide sequence ID" value="NZ_WUCM01000004.1"/>
</dbReference>
<dbReference type="RefSeq" id="YP_002345281.1">
    <property type="nucleotide sequence ID" value="NC_003143.1"/>
</dbReference>
<dbReference type="SMR" id="Q8ZJB6"/>
<dbReference type="STRING" id="214092.YPO0199"/>
<dbReference type="PaxDb" id="214092-YPO0199"/>
<dbReference type="DNASU" id="1148928"/>
<dbReference type="EnsemblBacteria" id="AAS60474">
    <property type="protein sequence ID" value="AAS60474"/>
    <property type="gene ID" value="YP_0198"/>
</dbReference>
<dbReference type="GeneID" id="57974404"/>
<dbReference type="KEGG" id="ype:YPO0199"/>
<dbReference type="KEGG" id="ypk:y3981"/>
<dbReference type="KEGG" id="ypm:YP_0198"/>
<dbReference type="PATRIC" id="fig|214092.21.peg.431"/>
<dbReference type="eggNOG" id="COG2168">
    <property type="taxonomic scope" value="Bacteria"/>
</dbReference>
<dbReference type="HOGENOM" id="CLU_166087_2_1_6"/>
<dbReference type="OMA" id="MLHTINK"/>
<dbReference type="OrthoDB" id="9795117at2"/>
<dbReference type="Proteomes" id="UP000000815">
    <property type="component" value="Chromosome"/>
</dbReference>
<dbReference type="Proteomes" id="UP000001019">
    <property type="component" value="Chromosome"/>
</dbReference>
<dbReference type="Proteomes" id="UP000002490">
    <property type="component" value="Chromosome"/>
</dbReference>
<dbReference type="GO" id="GO:1990228">
    <property type="term" value="C:sulfurtransferase complex"/>
    <property type="evidence" value="ECO:0000318"/>
    <property type="project" value="GO_Central"/>
</dbReference>
<dbReference type="GO" id="GO:0002143">
    <property type="term" value="P:tRNA wobble position uridine thiolation"/>
    <property type="evidence" value="ECO:0000318"/>
    <property type="project" value="GO_Central"/>
</dbReference>
<dbReference type="FunFam" id="3.40.1260.10:FF:000002">
    <property type="entry name" value="Sulfurtransferase TusB"/>
    <property type="match status" value="1"/>
</dbReference>
<dbReference type="Gene3D" id="3.40.1260.10">
    <property type="entry name" value="DsrEFH-like"/>
    <property type="match status" value="1"/>
</dbReference>
<dbReference type="HAMAP" id="MF_01564">
    <property type="entry name" value="Thiourid_synth_B"/>
    <property type="match status" value="1"/>
</dbReference>
<dbReference type="InterPro" id="IPR027396">
    <property type="entry name" value="DsrEFH-like"/>
</dbReference>
<dbReference type="InterPro" id="IPR023526">
    <property type="entry name" value="Sulphur_relay_TusB"/>
</dbReference>
<dbReference type="InterPro" id="IPR007215">
    <property type="entry name" value="Sulphur_relay_TusB/DsrH"/>
</dbReference>
<dbReference type="NCBIfam" id="NF010035">
    <property type="entry name" value="PRK13510.1"/>
    <property type="match status" value="1"/>
</dbReference>
<dbReference type="NCBIfam" id="TIGR03011">
    <property type="entry name" value="sulf_tusB_dsrH"/>
    <property type="match status" value="1"/>
</dbReference>
<dbReference type="PANTHER" id="PTHR37526">
    <property type="entry name" value="PROTEIN TUSB"/>
    <property type="match status" value="1"/>
</dbReference>
<dbReference type="PANTHER" id="PTHR37526:SF1">
    <property type="entry name" value="PROTEIN TUSB"/>
    <property type="match status" value="1"/>
</dbReference>
<dbReference type="Pfam" id="PF04077">
    <property type="entry name" value="DsrH"/>
    <property type="match status" value="1"/>
</dbReference>
<dbReference type="SUPFAM" id="SSF75169">
    <property type="entry name" value="DsrEFH-like"/>
    <property type="match status" value="1"/>
</dbReference>
<evidence type="ECO:0000255" key="1">
    <source>
        <dbReference type="HAMAP-Rule" id="MF_01564"/>
    </source>
</evidence>
<sequence length="95" mass="10577">MLYTVSHSPYHCDLSALLRLATSEDDILLLQDGVIAALKESETLKLLLNNPASLFVLEDDVIARGLVGQISDNATLISYTHFVDLTLRHQQQLAW</sequence>
<proteinExistence type="inferred from homology"/>
<organism>
    <name type="scientific">Yersinia pestis</name>
    <dbReference type="NCBI Taxonomy" id="632"/>
    <lineage>
        <taxon>Bacteria</taxon>
        <taxon>Pseudomonadati</taxon>
        <taxon>Pseudomonadota</taxon>
        <taxon>Gammaproteobacteria</taxon>
        <taxon>Enterobacterales</taxon>
        <taxon>Yersiniaceae</taxon>
        <taxon>Yersinia</taxon>
    </lineage>
</organism>